<protein>
    <recommendedName>
        <fullName>E3 ubiquitin-protein ligase TM129</fullName>
        <ecNumber>2.3.2.27</ecNumber>
    </recommendedName>
    <alternativeName>
        <fullName evidence="4">RING-type E3 ubiquitin transferase TM129</fullName>
    </alternativeName>
</protein>
<sequence>MDSPEVTFTLAYLVFAVCFVFTPNEFYSAGLTVQNLLSGWLGSEDAAFVPYHLRRTSATLLCHSLLPLGYYMGMCFAASEKQLYSPGQAPEAWQLFLLLAVTLPLLSCTLIYYWSWDRWTRHPLAQTLALYALPQSGWQAVASSINTEFRRIDKFATGAPGARVIVTDTWVMKVTTYRVHVAQQQDVHLTVTESRQHDLSPDSNLPVQLLTIRVASTSPGTQPFDIRLNSSEYGELCEKLHAPIRSAANVVIRQSLGDLFLETFASHVEVNPAYSVPSNQELEPCIGCMQTRASVKLVKTCQEPAVGECQQCYCRPMWCLTCMGKWFASRQDPQRPDTWLASRVPCPTCRARFCILDVCCVR</sequence>
<feature type="chain" id="PRO_0000291042" description="E3 ubiquitin-protein ligase TM129">
    <location>
        <begin position="1"/>
        <end position="362"/>
    </location>
</feature>
<feature type="topological domain" description="Lumenal" evidence="2">
    <location>
        <begin position="1"/>
        <end position="6"/>
    </location>
</feature>
<feature type="transmembrane region" description="Helical" evidence="2">
    <location>
        <begin position="7"/>
        <end position="27"/>
    </location>
</feature>
<feature type="topological domain" description="Cytoplasmic" evidence="2">
    <location>
        <begin position="28"/>
        <end position="56"/>
    </location>
</feature>
<feature type="transmembrane region" description="Helical" evidence="2">
    <location>
        <begin position="57"/>
        <end position="77"/>
    </location>
</feature>
<feature type="topological domain" description="Lumenal" evidence="2">
    <location>
        <begin position="78"/>
        <end position="94"/>
    </location>
</feature>
<feature type="transmembrane region" description="Helical" evidence="2">
    <location>
        <begin position="95"/>
        <end position="115"/>
    </location>
</feature>
<feature type="topological domain" description="Cytoplasmic" evidence="2">
    <location>
        <begin position="116"/>
        <end position="362"/>
    </location>
</feature>
<feature type="zinc finger region" description="RING-type; degenerate">
    <location>
        <begin position="285"/>
        <end position="350"/>
    </location>
</feature>
<feature type="splice variant" id="VSP_026159" description="In isoform 2." evidence="3">
    <location>
        <begin position="1"/>
        <end position="71"/>
    </location>
</feature>
<feature type="sequence conflict" description="In Ref. 1; BAB22394." evidence="4" ref="1">
    <original>G</original>
    <variation>A</variation>
    <location>
        <position position="69"/>
    </location>
</feature>
<feature type="sequence conflict" description="In Ref. 1; BAE42795." evidence="4" ref="1">
    <original>C</original>
    <variation>R</variation>
    <location>
        <position position="322"/>
    </location>
</feature>
<comment type="function">
    <text evidence="1">E3 ubiquitin-protein ligase involved in ER-associated protein degradation, preferentially associates with the E2 enzyme UBE2J2. Exploited by viral US11 proteins to mediate HLA class I proteins degradation.</text>
</comment>
<comment type="catalytic activity">
    <reaction>
        <text>S-ubiquitinyl-[E2 ubiquitin-conjugating enzyme]-L-cysteine + [acceptor protein]-L-lysine = [E2 ubiquitin-conjugating enzyme]-L-cysteine + N(6)-ubiquitinyl-[acceptor protein]-L-lysine.</text>
        <dbReference type="EC" id="2.3.2.27"/>
    </reaction>
</comment>
<comment type="pathway">
    <text>Protein modification; protein ubiquitination.</text>
</comment>
<comment type="subunit">
    <text evidence="1">Integral component of ER-resident dislocation complexes.</text>
</comment>
<comment type="subcellular location">
    <subcellularLocation>
        <location evidence="1">Endoplasmic reticulum membrane</location>
        <topology evidence="1">Multi-pass membrane protein</topology>
    </subcellularLocation>
</comment>
<comment type="alternative products">
    <event type="alternative splicing"/>
    <isoform>
        <id>Q8K304-1</id>
        <name>1</name>
        <sequence type="displayed"/>
    </isoform>
    <isoform>
        <id>Q8K304-2</id>
        <name>2</name>
        <sequence type="described" ref="VSP_026159"/>
    </isoform>
</comment>
<comment type="domain">
    <text evidence="1">The RING-type zinc finger domain is responsible for E3 ubiquitin ligase activity.</text>
</comment>
<comment type="similarity">
    <text evidence="4">Belongs to the TMEM129 family.</text>
</comment>
<organism>
    <name type="scientific">Mus musculus</name>
    <name type="common">Mouse</name>
    <dbReference type="NCBI Taxonomy" id="10090"/>
    <lineage>
        <taxon>Eukaryota</taxon>
        <taxon>Metazoa</taxon>
        <taxon>Chordata</taxon>
        <taxon>Craniata</taxon>
        <taxon>Vertebrata</taxon>
        <taxon>Euteleostomi</taxon>
        <taxon>Mammalia</taxon>
        <taxon>Eutheria</taxon>
        <taxon>Euarchontoglires</taxon>
        <taxon>Glires</taxon>
        <taxon>Rodentia</taxon>
        <taxon>Myomorpha</taxon>
        <taxon>Muroidea</taxon>
        <taxon>Muridae</taxon>
        <taxon>Murinae</taxon>
        <taxon>Mus</taxon>
        <taxon>Mus</taxon>
    </lineage>
</organism>
<keyword id="KW-0025">Alternative splicing</keyword>
<keyword id="KW-0256">Endoplasmic reticulum</keyword>
<keyword id="KW-0472">Membrane</keyword>
<keyword id="KW-0479">Metal-binding</keyword>
<keyword id="KW-1185">Reference proteome</keyword>
<keyword id="KW-0808">Transferase</keyword>
<keyword id="KW-0812">Transmembrane</keyword>
<keyword id="KW-1133">Transmembrane helix</keyword>
<keyword id="KW-0833">Ubl conjugation pathway</keyword>
<keyword id="KW-0834">Unfolded protein response</keyword>
<keyword id="KW-0862">Zinc</keyword>
<keyword id="KW-0863">Zinc-finger</keyword>
<reference key="1">
    <citation type="journal article" date="2005" name="Science">
        <title>The transcriptional landscape of the mammalian genome.</title>
        <authorList>
            <person name="Carninci P."/>
            <person name="Kasukawa T."/>
            <person name="Katayama S."/>
            <person name="Gough J."/>
            <person name="Frith M.C."/>
            <person name="Maeda N."/>
            <person name="Oyama R."/>
            <person name="Ravasi T."/>
            <person name="Lenhard B."/>
            <person name="Wells C."/>
            <person name="Kodzius R."/>
            <person name="Shimokawa K."/>
            <person name="Bajic V.B."/>
            <person name="Brenner S.E."/>
            <person name="Batalov S."/>
            <person name="Forrest A.R."/>
            <person name="Zavolan M."/>
            <person name="Davis M.J."/>
            <person name="Wilming L.G."/>
            <person name="Aidinis V."/>
            <person name="Allen J.E."/>
            <person name="Ambesi-Impiombato A."/>
            <person name="Apweiler R."/>
            <person name="Aturaliya R.N."/>
            <person name="Bailey T.L."/>
            <person name="Bansal M."/>
            <person name="Baxter L."/>
            <person name="Beisel K.W."/>
            <person name="Bersano T."/>
            <person name="Bono H."/>
            <person name="Chalk A.M."/>
            <person name="Chiu K.P."/>
            <person name="Choudhary V."/>
            <person name="Christoffels A."/>
            <person name="Clutterbuck D.R."/>
            <person name="Crowe M.L."/>
            <person name="Dalla E."/>
            <person name="Dalrymple B.P."/>
            <person name="de Bono B."/>
            <person name="Della Gatta G."/>
            <person name="di Bernardo D."/>
            <person name="Down T."/>
            <person name="Engstrom P."/>
            <person name="Fagiolini M."/>
            <person name="Faulkner G."/>
            <person name="Fletcher C.F."/>
            <person name="Fukushima T."/>
            <person name="Furuno M."/>
            <person name="Futaki S."/>
            <person name="Gariboldi M."/>
            <person name="Georgii-Hemming P."/>
            <person name="Gingeras T.R."/>
            <person name="Gojobori T."/>
            <person name="Green R.E."/>
            <person name="Gustincich S."/>
            <person name="Harbers M."/>
            <person name="Hayashi Y."/>
            <person name="Hensch T.K."/>
            <person name="Hirokawa N."/>
            <person name="Hill D."/>
            <person name="Huminiecki L."/>
            <person name="Iacono M."/>
            <person name="Ikeo K."/>
            <person name="Iwama A."/>
            <person name="Ishikawa T."/>
            <person name="Jakt M."/>
            <person name="Kanapin A."/>
            <person name="Katoh M."/>
            <person name="Kawasawa Y."/>
            <person name="Kelso J."/>
            <person name="Kitamura H."/>
            <person name="Kitano H."/>
            <person name="Kollias G."/>
            <person name="Krishnan S.P."/>
            <person name="Kruger A."/>
            <person name="Kummerfeld S.K."/>
            <person name="Kurochkin I.V."/>
            <person name="Lareau L.F."/>
            <person name="Lazarevic D."/>
            <person name="Lipovich L."/>
            <person name="Liu J."/>
            <person name="Liuni S."/>
            <person name="McWilliam S."/>
            <person name="Madan Babu M."/>
            <person name="Madera M."/>
            <person name="Marchionni L."/>
            <person name="Matsuda H."/>
            <person name="Matsuzawa S."/>
            <person name="Miki H."/>
            <person name="Mignone F."/>
            <person name="Miyake S."/>
            <person name="Morris K."/>
            <person name="Mottagui-Tabar S."/>
            <person name="Mulder N."/>
            <person name="Nakano N."/>
            <person name="Nakauchi H."/>
            <person name="Ng P."/>
            <person name="Nilsson R."/>
            <person name="Nishiguchi S."/>
            <person name="Nishikawa S."/>
            <person name="Nori F."/>
            <person name="Ohara O."/>
            <person name="Okazaki Y."/>
            <person name="Orlando V."/>
            <person name="Pang K.C."/>
            <person name="Pavan W.J."/>
            <person name="Pavesi G."/>
            <person name="Pesole G."/>
            <person name="Petrovsky N."/>
            <person name="Piazza S."/>
            <person name="Reed J."/>
            <person name="Reid J.F."/>
            <person name="Ring B.Z."/>
            <person name="Ringwald M."/>
            <person name="Rost B."/>
            <person name="Ruan Y."/>
            <person name="Salzberg S.L."/>
            <person name="Sandelin A."/>
            <person name="Schneider C."/>
            <person name="Schoenbach C."/>
            <person name="Sekiguchi K."/>
            <person name="Semple C.A."/>
            <person name="Seno S."/>
            <person name="Sessa L."/>
            <person name="Sheng Y."/>
            <person name="Shibata Y."/>
            <person name="Shimada H."/>
            <person name="Shimada K."/>
            <person name="Silva D."/>
            <person name="Sinclair B."/>
            <person name="Sperling S."/>
            <person name="Stupka E."/>
            <person name="Sugiura K."/>
            <person name="Sultana R."/>
            <person name="Takenaka Y."/>
            <person name="Taki K."/>
            <person name="Tammoja K."/>
            <person name="Tan S.L."/>
            <person name="Tang S."/>
            <person name="Taylor M.S."/>
            <person name="Tegner J."/>
            <person name="Teichmann S.A."/>
            <person name="Ueda H.R."/>
            <person name="van Nimwegen E."/>
            <person name="Verardo R."/>
            <person name="Wei C.L."/>
            <person name="Yagi K."/>
            <person name="Yamanishi H."/>
            <person name="Zabarovsky E."/>
            <person name="Zhu S."/>
            <person name="Zimmer A."/>
            <person name="Hide W."/>
            <person name="Bult C."/>
            <person name="Grimmond S.M."/>
            <person name="Teasdale R.D."/>
            <person name="Liu E.T."/>
            <person name="Brusic V."/>
            <person name="Quackenbush J."/>
            <person name="Wahlestedt C."/>
            <person name="Mattick J.S."/>
            <person name="Hume D.A."/>
            <person name="Kai C."/>
            <person name="Sasaki D."/>
            <person name="Tomaru Y."/>
            <person name="Fukuda S."/>
            <person name="Kanamori-Katayama M."/>
            <person name="Suzuki M."/>
            <person name="Aoki J."/>
            <person name="Arakawa T."/>
            <person name="Iida J."/>
            <person name="Imamura K."/>
            <person name="Itoh M."/>
            <person name="Kato T."/>
            <person name="Kawaji H."/>
            <person name="Kawagashira N."/>
            <person name="Kawashima T."/>
            <person name="Kojima M."/>
            <person name="Kondo S."/>
            <person name="Konno H."/>
            <person name="Nakano K."/>
            <person name="Ninomiya N."/>
            <person name="Nishio T."/>
            <person name="Okada M."/>
            <person name="Plessy C."/>
            <person name="Shibata K."/>
            <person name="Shiraki T."/>
            <person name="Suzuki S."/>
            <person name="Tagami M."/>
            <person name="Waki K."/>
            <person name="Watahiki A."/>
            <person name="Okamura-Oho Y."/>
            <person name="Suzuki H."/>
            <person name="Kawai J."/>
            <person name="Hayashizaki Y."/>
        </authorList>
    </citation>
    <scope>NUCLEOTIDE SEQUENCE [LARGE SCALE MRNA] (ISOFORMS 1 AND 2)</scope>
    <source>
        <strain>C57BL/6J</strain>
        <strain>NOD</strain>
        <tissue>Kidney</tissue>
        <tissue>Spleen</tissue>
    </source>
</reference>
<reference key="2">
    <citation type="journal article" date="2004" name="Genome Res.">
        <title>The status, quality, and expansion of the NIH full-length cDNA project: the Mammalian Gene Collection (MGC).</title>
        <authorList>
            <consortium name="The MGC Project Team"/>
        </authorList>
    </citation>
    <scope>NUCLEOTIDE SEQUENCE [LARGE SCALE MRNA] (ISOFORM 1)</scope>
    <source>
        <strain>Czech II</strain>
        <strain>FVB/N</strain>
        <tissue>Liver</tissue>
        <tissue>Mammary tumor</tissue>
    </source>
</reference>
<dbReference type="EC" id="2.3.2.27"/>
<dbReference type="EMBL" id="AK002836">
    <property type="protein sequence ID" value="BAB22394.1"/>
    <property type="molecule type" value="mRNA"/>
</dbReference>
<dbReference type="EMBL" id="AK172044">
    <property type="protein sequence ID" value="BAE42795.1"/>
    <property type="molecule type" value="mRNA"/>
</dbReference>
<dbReference type="EMBL" id="BC029088">
    <property type="protein sequence ID" value="AAH29088.1"/>
    <property type="molecule type" value="mRNA"/>
</dbReference>
<dbReference type="EMBL" id="BC094042">
    <property type="protein sequence ID" value="AAH94042.1"/>
    <property type="molecule type" value="mRNA"/>
</dbReference>
<dbReference type="CCDS" id="CCDS19206.1">
    <molecule id="Q8K304-1"/>
</dbReference>
<dbReference type="RefSeq" id="NP_001343912.1">
    <molecule id="Q8K304-2"/>
    <property type="nucleotide sequence ID" value="NM_001356983.1"/>
</dbReference>
<dbReference type="RefSeq" id="NP_001343914.1">
    <molecule id="Q8K304-2"/>
    <property type="nucleotide sequence ID" value="NM_001356985.1"/>
</dbReference>
<dbReference type="RefSeq" id="NP_080974.2">
    <molecule id="Q8K304-1"/>
    <property type="nucleotide sequence ID" value="NM_026698.3"/>
</dbReference>
<dbReference type="RefSeq" id="XP_006504143.1">
    <property type="nucleotide sequence ID" value="XM_006504080.1"/>
</dbReference>
<dbReference type="RefSeq" id="XP_006504144.1">
    <property type="nucleotide sequence ID" value="XM_006504081.1"/>
</dbReference>
<dbReference type="FunCoup" id="Q8K304">
    <property type="interactions" value="2273"/>
</dbReference>
<dbReference type="STRING" id="10090.ENSMUSP00000019439"/>
<dbReference type="iPTMnet" id="Q8K304"/>
<dbReference type="PhosphoSitePlus" id="Q8K304"/>
<dbReference type="SwissPalm" id="Q8K304"/>
<dbReference type="PaxDb" id="10090-ENSMUSP00000019439"/>
<dbReference type="PeptideAtlas" id="Q8K304"/>
<dbReference type="ProteomicsDB" id="260673">
    <molecule id="Q8K304-1"/>
</dbReference>
<dbReference type="ProteomicsDB" id="260674">
    <molecule id="Q8K304-2"/>
</dbReference>
<dbReference type="Pumba" id="Q8K304"/>
<dbReference type="Antibodypedia" id="64956">
    <property type="antibodies" value="7 antibodies from 5 providers"/>
</dbReference>
<dbReference type="Ensembl" id="ENSMUST00000019439.9">
    <molecule id="Q8K304-1"/>
    <property type="protein sequence ID" value="ENSMUSP00000019439.8"/>
    <property type="gene ID" value="ENSMUSG00000019295.9"/>
</dbReference>
<dbReference type="GeneID" id="68366"/>
<dbReference type="KEGG" id="mmu:68366"/>
<dbReference type="UCSC" id="uc008xay.1">
    <molecule id="Q8K304-1"/>
    <property type="organism name" value="mouse"/>
</dbReference>
<dbReference type="AGR" id="MGI:1915616"/>
<dbReference type="CTD" id="92305"/>
<dbReference type="MGI" id="MGI:1915616">
    <property type="gene designation" value="Tmem129"/>
</dbReference>
<dbReference type="VEuPathDB" id="HostDB:ENSMUSG00000019295"/>
<dbReference type="eggNOG" id="KOG3899">
    <property type="taxonomic scope" value="Eukaryota"/>
</dbReference>
<dbReference type="GeneTree" id="ENSGT00390000013284"/>
<dbReference type="HOGENOM" id="CLU_048119_1_0_1"/>
<dbReference type="InParanoid" id="Q8K304"/>
<dbReference type="OMA" id="KFATGPP"/>
<dbReference type="OrthoDB" id="10055027at2759"/>
<dbReference type="PhylomeDB" id="Q8K304"/>
<dbReference type="TreeFam" id="TF314487"/>
<dbReference type="UniPathway" id="UPA00143"/>
<dbReference type="BioGRID-ORCS" id="68366">
    <property type="hits" value="3 hits in 78 CRISPR screens"/>
</dbReference>
<dbReference type="ChiTaRS" id="Tmem129">
    <property type="organism name" value="mouse"/>
</dbReference>
<dbReference type="PRO" id="PR:Q8K304"/>
<dbReference type="Proteomes" id="UP000000589">
    <property type="component" value="Chromosome 5"/>
</dbReference>
<dbReference type="RNAct" id="Q8K304">
    <property type="molecule type" value="protein"/>
</dbReference>
<dbReference type="Bgee" id="ENSMUSG00000019295">
    <property type="expression patterns" value="Expressed in spermatocyte and 268 other cell types or tissues"/>
</dbReference>
<dbReference type="ExpressionAtlas" id="Q8K304">
    <property type="expression patterns" value="baseline and differential"/>
</dbReference>
<dbReference type="GO" id="GO:0005789">
    <property type="term" value="C:endoplasmic reticulum membrane"/>
    <property type="evidence" value="ECO:0007669"/>
    <property type="project" value="UniProtKB-SubCell"/>
</dbReference>
<dbReference type="GO" id="GO:0061630">
    <property type="term" value="F:ubiquitin protein ligase activity"/>
    <property type="evidence" value="ECO:0007669"/>
    <property type="project" value="Ensembl"/>
</dbReference>
<dbReference type="GO" id="GO:0008270">
    <property type="term" value="F:zinc ion binding"/>
    <property type="evidence" value="ECO:0007669"/>
    <property type="project" value="UniProtKB-KW"/>
</dbReference>
<dbReference type="GO" id="GO:0000209">
    <property type="term" value="P:protein polyubiquitination"/>
    <property type="evidence" value="ECO:0007669"/>
    <property type="project" value="Ensembl"/>
</dbReference>
<dbReference type="GO" id="GO:0006986">
    <property type="term" value="P:response to unfolded protein"/>
    <property type="evidence" value="ECO:0007669"/>
    <property type="project" value="UniProtKB-KW"/>
</dbReference>
<dbReference type="GO" id="GO:0030970">
    <property type="term" value="P:retrograde protein transport, ER to cytosol"/>
    <property type="evidence" value="ECO:0007669"/>
    <property type="project" value="Ensembl"/>
</dbReference>
<dbReference type="GO" id="GO:0006511">
    <property type="term" value="P:ubiquitin-dependent protein catabolic process"/>
    <property type="evidence" value="ECO:0007669"/>
    <property type="project" value="Ensembl"/>
</dbReference>
<dbReference type="InterPro" id="IPR018801">
    <property type="entry name" value="TM129"/>
</dbReference>
<dbReference type="PANTHER" id="PTHR31322">
    <property type="entry name" value="E3 UBIQUITIN-PROTEIN LIGASE TM129"/>
    <property type="match status" value="1"/>
</dbReference>
<dbReference type="PANTHER" id="PTHR31322:SF2">
    <property type="entry name" value="E3 UBIQUITIN-PROTEIN LIGASE TM129"/>
    <property type="match status" value="1"/>
</dbReference>
<dbReference type="Pfam" id="PF10272">
    <property type="entry name" value="Tmpp129"/>
    <property type="match status" value="1"/>
</dbReference>
<evidence type="ECO:0000250" key="1">
    <source>
        <dbReference type="UniProtKB" id="A0AVI4"/>
    </source>
</evidence>
<evidence type="ECO:0000255" key="2"/>
<evidence type="ECO:0000303" key="3">
    <source>
    </source>
</evidence>
<evidence type="ECO:0000305" key="4"/>
<name>TM129_MOUSE</name>
<proteinExistence type="evidence at transcript level"/>
<accession>Q8K304</accession>
<accession>Q3TA74</accession>
<accession>Q9DCF3</accession>
<gene>
    <name type="primary">Tmem129</name>
</gene>